<reference key="1">
    <citation type="journal article" date="2004" name="Nucleic Acids Res.">
        <title>The genome sequence of Bacillus cereus ATCC 10987 reveals metabolic adaptations and a large plasmid related to Bacillus anthracis pXO1.</title>
        <authorList>
            <person name="Rasko D.A."/>
            <person name="Ravel J."/>
            <person name="Oekstad O.A."/>
            <person name="Helgason E."/>
            <person name="Cer R.Z."/>
            <person name="Jiang L."/>
            <person name="Shores K.A."/>
            <person name="Fouts D.E."/>
            <person name="Tourasse N.J."/>
            <person name="Angiuoli S.V."/>
            <person name="Kolonay J.F."/>
            <person name="Nelson W.C."/>
            <person name="Kolstoe A.-B."/>
            <person name="Fraser C.M."/>
            <person name="Read T.D."/>
        </authorList>
    </citation>
    <scope>NUCLEOTIDE SEQUENCE [LARGE SCALE GENOMIC DNA]</scope>
    <source>
        <strain>ATCC 10987 / NRS 248</strain>
    </source>
</reference>
<sequence length="132" mass="14742">MWNEFKKFAFKGNVVDLAVGVVIGAAFGKIVSSLVKDIITPLLGMVLGGVDFTSLHFGYGKSAVMYGNFIQTIFDFLIIAASIFMFVKVFNKLTSKKEEEKEEEIPEPTKEEVLLSEIRDLLKQQNSSKDRA</sequence>
<proteinExistence type="inferred from homology"/>
<name>MSCL_BACC1</name>
<protein>
    <recommendedName>
        <fullName evidence="1">Large-conductance mechanosensitive channel</fullName>
    </recommendedName>
</protein>
<evidence type="ECO:0000255" key="1">
    <source>
        <dbReference type="HAMAP-Rule" id="MF_00115"/>
    </source>
</evidence>
<comment type="function">
    <text evidence="1">Channel that opens in response to stretch forces in the membrane lipid bilayer. May participate in the regulation of osmotic pressure changes within the cell.</text>
</comment>
<comment type="subunit">
    <text evidence="1">Homopentamer.</text>
</comment>
<comment type="subcellular location">
    <subcellularLocation>
        <location evidence="1">Cell membrane</location>
        <topology evidence="1">Multi-pass membrane protein</topology>
    </subcellularLocation>
</comment>
<comment type="similarity">
    <text evidence="1">Belongs to the MscL family.</text>
</comment>
<accession>Q72Z61</accession>
<keyword id="KW-1003">Cell membrane</keyword>
<keyword id="KW-0407">Ion channel</keyword>
<keyword id="KW-0406">Ion transport</keyword>
<keyword id="KW-0472">Membrane</keyword>
<keyword id="KW-0812">Transmembrane</keyword>
<keyword id="KW-1133">Transmembrane helix</keyword>
<keyword id="KW-0813">Transport</keyword>
<gene>
    <name evidence="1" type="primary">mscL</name>
    <name type="ordered locus">BCE_4808</name>
</gene>
<dbReference type="EMBL" id="AE017194">
    <property type="protein sequence ID" value="AAS43709.1"/>
    <property type="molecule type" value="Genomic_DNA"/>
</dbReference>
<dbReference type="KEGG" id="bca:BCE_4808"/>
<dbReference type="HOGENOM" id="CLU_095787_0_0_9"/>
<dbReference type="Proteomes" id="UP000002527">
    <property type="component" value="Chromosome"/>
</dbReference>
<dbReference type="GO" id="GO:0005886">
    <property type="term" value="C:plasma membrane"/>
    <property type="evidence" value="ECO:0007669"/>
    <property type="project" value="UniProtKB-SubCell"/>
</dbReference>
<dbReference type="GO" id="GO:0008381">
    <property type="term" value="F:mechanosensitive monoatomic ion channel activity"/>
    <property type="evidence" value="ECO:0007669"/>
    <property type="project" value="UniProtKB-UniRule"/>
</dbReference>
<dbReference type="FunFam" id="1.10.1200.120:FF:000001">
    <property type="entry name" value="Large-conductance mechanosensitive channel"/>
    <property type="match status" value="1"/>
</dbReference>
<dbReference type="Gene3D" id="1.10.1200.120">
    <property type="entry name" value="Large-conductance mechanosensitive channel, MscL, domain 1"/>
    <property type="match status" value="1"/>
</dbReference>
<dbReference type="HAMAP" id="MF_00115">
    <property type="entry name" value="MscL"/>
    <property type="match status" value="1"/>
</dbReference>
<dbReference type="InterPro" id="IPR019823">
    <property type="entry name" value="Mechanosensitive_channel_CS"/>
</dbReference>
<dbReference type="InterPro" id="IPR001185">
    <property type="entry name" value="MS_channel"/>
</dbReference>
<dbReference type="InterPro" id="IPR037673">
    <property type="entry name" value="MSC/AndL"/>
</dbReference>
<dbReference type="InterPro" id="IPR036019">
    <property type="entry name" value="MscL_channel"/>
</dbReference>
<dbReference type="NCBIfam" id="TIGR00220">
    <property type="entry name" value="mscL"/>
    <property type="match status" value="1"/>
</dbReference>
<dbReference type="NCBIfam" id="NF001843">
    <property type="entry name" value="PRK00567.1-4"/>
    <property type="match status" value="1"/>
</dbReference>
<dbReference type="NCBIfam" id="NF010560">
    <property type="entry name" value="PRK13955.1"/>
    <property type="match status" value="1"/>
</dbReference>
<dbReference type="PANTHER" id="PTHR30266:SF2">
    <property type="entry name" value="LARGE-CONDUCTANCE MECHANOSENSITIVE CHANNEL"/>
    <property type="match status" value="1"/>
</dbReference>
<dbReference type="PANTHER" id="PTHR30266">
    <property type="entry name" value="MECHANOSENSITIVE CHANNEL MSCL"/>
    <property type="match status" value="1"/>
</dbReference>
<dbReference type="Pfam" id="PF01741">
    <property type="entry name" value="MscL"/>
    <property type="match status" value="1"/>
</dbReference>
<dbReference type="PRINTS" id="PR01264">
    <property type="entry name" value="MECHCHANNEL"/>
</dbReference>
<dbReference type="SUPFAM" id="SSF81330">
    <property type="entry name" value="Gated mechanosensitive channel"/>
    <property type="match status" value="1"/>
</dbReference>
<dbReference type="PROSITE" id="PS01327">
    <property type="entry name" value="MSCL"/>
    <property type="match status" value="1"/>
</dbReference>
<organism>
    <name type="scientific">Bacillus cereus (strain ATCC 10987 / NRS 248)</name>
    <dbReference type="NCBI Taxonomy" id="222523"/>
    <lineage>
        <taxon>Bacteria</taxon>
        <taxon>Bacillati</taxon>
        <taxon>Bacillota</taxon>
        <taxon>Bacilli</taxon>
        <taxon>Bacillales</taxon>
        <taxon>Bacillaceae</taxon>
        <taxon>Bacillus</taxon>
        <taxon>Bacillus cereus group</taxon>
    </lineage>
</organism>
<feature type="chain" id="PRO_0000237970" description="Large-conductance mechanosensitive channel">
    <location>
        <begin position="1"/>
        <end position="132"/>
    </location>
</feature>
<feature type="transmembrane region" description="Helical" evidence="1">
    <location>
        <begin position="14"/>
        <end position="34"/>
    </location>
</feature>
<feature type="transmembrane region" description="Helical" evidence="1">
    <location>
        <begin position="38"/>
        <end position="58"/>
    </location>
</feature>
<feature type="transmembrane region" description="Helical" evidence="1">
    <location>
        <begin position="67"/>
        <end position="87"/>
    </location>
</feature>